<feature type="chain" id="PRO_0000186377" description="Dihydrofolate reductase">
    <location>
        <begin position="1"/>
        <end position="461"/>
    </location>
</feature>
<feature type="domain" description="DHFR" evidence="2">
    <location>
        <begin position="233"/>
        <end position="447"/>
    </location>
</feature>
<feature type="binding site" evidence="1">
    <location>
        <position position="239"/>
    </location>
    <ligand>
        <name>NADP(+)</name>
        <dbReference type="ChEBI" id="CHEBI:58349"/>
    </ligand>
</feature>
<feature type="binding site" evidence="1">
    <location>
        <begin position="246"/>
        <end position="252"/>
    </location>
    <ligand>
        <name>NADP(+)</name>
        <dbReference type="ChEBI" id="CHEBI:58349"/>
    </ligand>
</feature>
<feature type="binding site" evidence="1">
    <location>
        <begin position="260"/>
        <end position="265"/>
    </location>
    <ligand>
        <name>substrate</name>
    </ligand>
</feature>
<feature type="binding site" evidence="1">
    <location>
        <begin position="292"/>
        <end position="294"/>
    </location>
    <ligand>
        <name>NADP(+)</name>
        <dbReference type="ChEBI" id="CHEBI:58349"/>
    </ligand>
</feature>
<feature type="binding site" evidence="1">
    <location>
        <position position="308"/>
    </location>
    <ligand>
        <name>substrate</name>
    </ligand>
</feature>
<feature type="binding site" evidence="1">
    <location>
        <begin position="314"/>
        <end position="316"/>
    </location>
    <ligand>
        <name>NADP(+)</name>
        <dbReference type="ChEBI" id="CHEBI:58349"/>
    </ligand>
</feature>
<feature type="binding site" evidence="1">
    <location>
        <begin position="365"/>
        <end position="372"/>
    </location>
    <ligand>
        <name>NADP(+)</name>
        <dbReference type="ChEBI" id="CHEBI:58349"/>
    </ligand>
</feature>
<feature type="sequence conflict" description="In Ref. 1; AAA57051." evidence="3" ref="1">
    <original>QP</original>
    <variation>HA</variation>
    <location>
        <begin position="126"/>
        <end position="127"/>
    </location>
</feature>
<dbReference type="EC" id="1.5.1.3"/>
<dbReference type="EMBL" id="L13703">
    <property type="protein sequence ID" value="AAA57051.1"/>
    <property type="molecule type" value="mRNA"/>
</dbReference>
<dbReference type="EMBL" id="CU329672">
    <property type="protein sequence ID" value="CAA20877.1"/>
    <property type="molecule type" value="Genomic_DNA"/>
</dbReference>
<dbReference type="PIR" id="T43248">
    <property type="entry name" value="T43248"/>
</dbReference>
<dbReference type="RefSeq" id="NP_588353.1">
    <property type="nucleotide sequence ID" value="NM_001023344.2"/>
</dbReference>
<dbReference type="SMR" id="P36591"/>
<dbReference type="BioGRID" id="275621">
    <property type="interactions" value="9"/>
</dbReference>
<dbReference type="FunCoup" id="P36591">
    <property type="interactions" value="291"/>
</dbReference>
<dbReference type="STRING" id="284812.P36591"/>
<dbReference type="ESTHER" id="schpo-dyr">
    <property type="family name" value="FSH1"/>
</dbReference>
<dbReference type="iPTMnet" id="P36591"/>
<dbReference type="PaxDb" id="4896-SPCC1223.08c.1"/>
<dbReference type="EnsemblFungi" id="SPCC1223.08c.1">
    <property type="protein sequence ID" value="SPCC1223.08c.1:pep"/>
    <property type="gene ID" value="SPCC1223.08c"/>
</dbReference>
<dbReference type="GeneID" id="2539048"/>
<dbReference type="KEGG" id="spo:2539048"/>
<dbReference type="PomBase" id="SPCC1223.08c">
    <property type="gene designation" value="dfr1"/>
</dbReference>
<dbReference type="VEuPathDB" id="FungiDB:SPCC1223.08c"/>
<dbReference type="eggNOG" id="KOG1324">
    <property type="taxonomic scope" value="Eukaryota"/>
</dbReference>
<dbReference type="eggNOG" id="KOG2551">
    <property type="taxonomic scope" value="Eukaryota"/>
</dbReference>
<dbReference type="HOGENOM" id="CLU_627245_0_0_1"/>
<dbReference type="InParanoid" id="P36591"/>
<dbReference type="OMA" id="HIVPQQA"/>
<dbReference type="Reactome" id="R-SPO-196757">
    <property type="pathway name" value="Metabolism of folate and pterines"/>
</dbReference>
<dbReference type="UniPathway" id="UPA00077">
    <property type="reaction ID" value="UER00158"/>
</dbReference>
<dbReference type="PRO" id="PR:P36591"/>
<dbReference type="Proteomes" id="UP000002485">
    <property type="component" value="Chromosome III"/>
</dbReference>
<dbReference type="GO" id="GO:0005829">
    <property type="term" value="C:cytosol"/>
    <property type="evidence" value="ECO:0007005"/>
    <property type="project" value="PomBase"/>
</dbReference>
<dbReference type="GO" id="GO:0005739">
    <property type="term" value="C:mitochondrion"/>
    <property type="evidence" value="ECO:0000318"/>
    <property type="project" value="GO_Central"/>
</dbReference>
<dbReference type="GO" id="GO:0005524">
    <property type="term" value="F:ATP binding"/>
    <property type="evidence" value="ECO:0007669"/>
    <property type="project" value="UniProtKB-KW"/>
</dbReference>
<dbReference type="GO" id="GO:0004146">
    <property type="term" value="F:dihydrofolate reductase activity"/>
    <property type="evidence" value="ECO:0000316"/>
    <property type="project" value="PomBase"/>
</dbReference>
<dbReference type="GO" id="GO:0004622">
    <property type="term" value="F:lysophospholipase activity"/>
    <property type="evidence" value="ECO:0000304"/>
    <property type="project" value="PomBase"/>
</dbReference>
<dbReference type="GO" id="GO:0050661">
    <property type="term" value="F:NADP binding"/>
    <property type="evidence" value="ECO:0000318"/>
    <property type="project" value="GO_Central"/>
</dbReference>
<dbReference type="GO" id="GO:0046452">
    <property type="term" value="P:dihydrofolate metabolic process"/>
    <property type="evidence" value="ECO:0000318"/>
    <property type="project" value="GO_Central"/>
</dbReference>
<dbReference type="GO" id="GO:0046655">
    <property type="term" value="P:folic acid metabolic process"/>
    <property type="evidence" value="ECO:0000318"/>
    <property type="project" value="GO_Central"/>
</dbReference>
<dbReference type="GO" id="GO:0006730">
    <property type="term" value="P:one-carbon metabolic process"/>
    <property type="evidence" value="ECO:0007669"/>
    <property type="project" value="UniProtKB-KW"/>
</dbReference>
<dbReference type="GO" id="GO:0046654">
    <property type="term" value="P:tetrahydrofolate biosynthetic process"/>
    <property type="evidence" value="ECO:0000318"/>
    <property type="project" value="GO_Central"/>
</dbReference>
<dbReference type="CDD" id="cd00209">
    <property type="entry name" value="DHFR"/>
    <property type="match status" value="1"/>
</dbReference>
<dbReference type="FunFam" id="3.40.50.1820:FF:000073">
    <property type="entry name" value="esterase OVCA2 isoform X6"/>
    <property type="match status" value="1"/>
</dbReference>
<dbReference type="Gene3D" id="3.40.50.1820">
    <property type="entry name" value="alpha/beta hydrolase"/>
    <property type="match status" value="1"/>
</dbReference>
<dbReference type="Gene3D" id="3.40.430.10">
    <property type="entry name" value="Dihydrofolate Reductase, subunit A"/>
    <property type="match status" value="1"/>
</dbReference>
<dbReference type="InterPro" id="IPR029058">
    <property type="entry name" value="AB_hydrolase_fold"/>
</dbReference>
<dbReference type="InterPro" id="IPR012259">
    <property type="entry name" value="DHFR"/>
</dbReference>
<dbReference type="InterPro" id="IPR024072">
    <property type="entry name" value="DHFR-like_dom_sf"/>
</dbReference>
<dbReference type="InterPro" id="IPR017925">
    <property type="entry name" value="DHFR_CS"/>
</dbReference>
<dbReference type="InterPro" id="IPR001796">
    <property type="entry name" value="DHFR_dom"/>
</dbReference>
<dbReference type="InterPro" id="IPR005645">
    <property type="entry name" value="FSH-like_dom"/>
</dbReference>
<dbReference type="PANTHER" id="PTHR48069">
    <property type="entry name" value="DIHYDROFOLATE REDUCTASE"/>
    <property type="match status" value="1"/>
</dbReference>
<dbReference type="PANTHER" id="PTHR48069:SF3">
    <property type="entry name" value="DIHYDROFOLATE REDUCTASE"/>
    <property type="match status" value="1"/>
</dbReference>
<dbReference type="Pfam" id="PF00186">
    <property type="entry name" value="DHFR_1"/>
    <property type="match status" value="1"/>
</dbReference>
<dbReference type="Pfam" id="PF03959">
    <property type="entry name" value="FSH1"/>
    <property type="match status" value="1"/>
</dbReference>
<dbReference type="PRINTS" id="PR00070">
    <property type="entry name" value="DHFR"/>
</dbReference>
<dbReference type="SUPFAM" id="SSF53474">
    <property type="entry name" value="alpha/beta-Hydrolases"/>
    <property type="match status" value="1"/>
</dbReference>
<dbReference type="SUPFAM" id="SSF53597">
    <property type="entry name" value="Dihydrofolate reductase-like"/>
    <property type="match status" value="1"/>
</dbReference>
<dbReference type="PROSITE" id="PS00075">
    <property type="entry name" value="DHFR_1"/>
    <property type="match status" value="1"/>
</dbReference>
<dbReference type="PROSITE" id="PS51330">
    <property type="entry name" value="DHFR_2"/>
    <property type="match status" value="1"/>
</dbReference>
<name>DYR_SCHPO</name>
<proteinExistence type="evidence at transcript level"/>
<protein>
    <recommendedName>
        <fullName>Dihydrofolate reductase</fullName>
        <ecNumber>1.5.1.3</ecNumber>
    </recommendedName>
</protein>
<sequence>MSKPLKVLCLHGWIQSGPVFSKKMGSVQKYLSKYAELHFPTGPVVADEEADPNDEEEKKRLAALGGEQNGGKFGWFEVEDFKNTYGSWDESLECINQYMQEKGPFDGLIGFSQGAGIGAMLAQMLQPGQPPNPYVQHPPFKFVVFVGGFRAEKPEFDHFYNPKLTTPSLHIAGTSDTLVPLARSKQLVERCENAHVLLHPGQHIVPQQAVYKTGIRDFMFSAPTKEPTKHPRDLTMIVAVSSPNLGIGKKNSMPWHIKQEMAYFANVTSSTESSGQLEEGKSKIMNVVIMGRSCYDSLPKKNRPLKDRINIVITRNSNYNFGLTKKEKMPENLYAADCIDSALDLVAEKYGADSDIQVGKVFIIGGSFLYGSALYHPLTKNLLFTRIHKEYPCDSFFPFEPAESSDWVRKAHPELEKFVGIPVEEGRLKAASSNKEEVEIEFELYGKNDDVNVALEKLSIC</sequence>
<gene>
    <name type="primary">dfr1</name>
    <name type="ORF">SPCC1223.08c</name>
</gene>
<accession>P36591</accession>
<accession>O74408</accession>
<evidence type="ECO:0000250" key="1"/>
<evidence type="ECO:0000255" key="2">
    <source>
        <dbReference type="PROSITE-ProRule" id="PRU00660"/>
    </source>
</evidence>
<evidence type="ECO:0000305" key="3"/>
<reference key="1">
    <citation type="journal article" date="1994" name="Gene">
        <title>The isolation and characterization of the gene (dfr1) encoding dihydrofolate reductase (DHFR) in Schizosaccharomyces pombe.</title>
        <authorList>
            <person name="Bertani L.E."/>
            <person name="Campbell J.L."/>
        </authorList>
    </citation>
    <scope>NUCLEOTIDE SEQUENCE [MRNA]</scope>
</reference>
<reference key="2">
    <citation type="journal article" date="2002" name="Nature">
        <title>The genome sequence of Schizosaccharomyces pombe.</title>
        <authorList>
            <person name="Wood V."/>
            <person name="Gwilliam R."/>
            <person name="Rajandream M.A."/>
            <person name="Lyne M.H."/>
            <person name="Lyne R."/>
            <person name="Stewart A."/>
            <person name="Sgouros J.G."/>
            <person name="Peat N."/>
            <person name="Hayles J."/>
            <person name="Baker S.G."/>
            <person name="Basham D."/>
            <person name="Bowman S."/>
            <person name="Brooks K."/>
            <person name="Brown D."/>
            <person name="Brown S."/>
            <person name="Chillingworth T."/>
            <person name="Churcher C.M."/>
            <person name="Collins M."/>
            <person name="Connor R."/>
            <person name="Cronin A."/>
            <person name="Davis P."/>
            <person name="Feltwell T."/>
            <person name="Fraser A."/>
            <person name="Gentles S."/>
            <person name="Goble A."/>
            <person name="Hamlin N."/>
            <person name="Harris D.E."/>
            <person name="Hidalgo J."/>
            <person name="Hodgson G."/>
            <person name="Holroyd S."/>
            <person name="Hornsby T."/>
            <person name="Howarth S."/>
            <person name="Huckle E.J."/>
            <person name="Hunt S."/>
            <person name="Jagels K."/>
            <person name="James K.D."/>
            <person name="Jones L."/>
            <person name="Jones M."/>
            <person name="Leather S."/>
            <person name="McDonald S."/>
            <person name="McLean J."/>
            <person name="Mooney P."/>
            <person name="Moule S."/>
            <person name="Mungall K.L."/>
            <person name="Murphy L.D."/>
            <person name="Niblett D."/>
            <person name="Odell C."/>
            <person name="Oliver K."/>
            <person name="O'Neil S."/>
            <person name="Pearson D."/>
            <person name="Quail M.A."/>
            <person name="Rabbinowitsch E."/>
            <person name="Rutherford K.M."/>
            <person name="Rutter S."/>
            <person name="Saunders D."/>
            <person name="Seeger K."/>
            <person name="Sharp S."/>
            <person name="Skelton J."/>
            <person name="Simmonds M.N."/>
            <person name="Squares R."/>
            <person name="Squares S."/>
            <person name="Stevens K."/>
            <person name="Taylor K."/>
            <person name="Taylor R.G."/>
            <person name="Tivey A."/>
            <person name="Walsh S.V."/>
            <person name="Warren T."/>
            <person name="Whitehead S."/>
            <person name="Woodward J.R."/>
            <person name="Volckaert G."/>
            <person name="Aert R."/>
            <person name="Robben J."/>
            <person name="Grymonprez B."/>
            <person name="Weltjens I."/>
            <person name="Vanstreels E."/>
            <person name="Rieger M."/>
            <person name="Schaefer M."/>
            <person name="Mueller-Auer S."/>
            <person name="Gabel C."/>
            <person name="Fuchs M."/>
            <person name="Duesterhoeft A."/>
            <person name="Fritzc C."/>
            <person name="Holzer E."/>
            <person name="Moestl D."/>
            <person name="Hilbert H."/>
            <person name="Borzym K."/>
            <person name="Langer I."/>
            <person name="Beck A."/>
            <person name="Lehrach H."/>
            <person name="Reinhardt R."/>
            <person name="Pohl T.M."/>
            <person name="Eger P."/>
            <person name="Zimmermann W."/>
            <person name="Wedler H."/>
            <person name="Wambutt R."/>
            <person name="Purnelle B."/>
            <person name="Goffeau A."/>
            <person name="Cadieu E."/>
            <person name="Dreano S."/>
            <person name="Gloux S."/>
            <person name="Lelaure V."/>
            <person name="Mottier S."/>
            <person name="Galibert F."/>
            <person name="Aves S.J."/>
            <person name="Xiang Z."/>
            <person name="Hunt C."/>
            <person name="Moore K."/>
            <person name="Hurst S.M."/>
            <person name="Lucas M."/>
            <person name="Rochet M."/>
            <person name="Gaillardin C."/>
            <person name="Tallada V.A."/>
            <person name="Garzon A."/>
            <person name="Thode G."/>
            <person name="Daga R.R."/>
            <person name="Cruzado L."/>
            <person name="Jimenez J."/>
            <person name="Sanchez M."/>
            <person name="del Rey F."/>
            <person name="Benito J."/>
            <person name="Dominguez A."/>
            <person name="Revuelta J.L."/>
            <person name="Moreno S."/>
            <person name="Armstrong J."/>
            <person name="Forsburg S.L."/>
            <person name="Cerutti L."/>
            <person name="Lowe T."/>
            <person name="McCombie W.R."/>
            <person name="Paulsen I."/>
            <person name="Potashkin J."/>
            <person name="Shpakovski G.V."/>
            <person name="Ussery D."/>
            <person name="Barrell B.G."/>
            <person name="Nurse P."/>
        </authorList>
    </citation>
    <scope>NUCLEOTIDE SEQUENCE [LARGE SCALE GENOMIC DNA]</scope>
    <source>
        <strain>972 / ATCC 24843</strain>
    </source>
</reference>
<keyword id="KW-0067">ATP-binding</keyword>
<keyword id="KW-0521">NADP</keyword>
<keyword id="KW-0547">Nucleotide-binding</keyword>
<keyword id="KW-0554">One-carbon metabolism</keyword>
<keyword id="KW-0560">Oxidoreductase</keyword>
<keyword id="KW-1185">Reference proteome</keyword>
<comment type="function">
    <text evidence="1">Key enzyme in folate metabolism. Catalyzes an essential reaction for de novo glycine and purine synthesis, and for DNA precursor synthesis (By similarity).</text>
</comment>
<comment type="catalytic activity">
    <reaction evidence="2">
        <text>(6S)-5,6,7,8-tetrahydrofolate + NADP(+) = 7,8-dihydrofolate + NADPH + H(+)</text>
        <dbReference type="Rhea" id="RHEA:15009"/>
        <dbReference type="ChEBI" id="CHEBI:15378"/>
        <dbReference type="ChEBI" id="CHEBI:57451"/>
        <dbReference type="ChEBI" id="CHEBI:57453"/>
        <dbReference type="ChEBI" id="CHEBI:57783"/>
        <dbReference type="ChEBI" id="CHEBI:58349"/>
        <dbReference type="EC" id="1.5.1.3"/>
    </reaction>
</comment>
<comment type="pathway">
    <text>Cofactor biosynthesis; tetrahydrofolate biosynthesis; 5,6,7,8-tetrahydrofolate from 7,8-dihydrofolate: step 1/1.</text>
</comment>
<comment type="similarity">
    <text evidence="3">Belongs to the dihydrofolate reductase family.</text>
</comment>
<organism>
    <name type="scientific">Schizosaccharomyces pombe (strain 972 / ATCC 24843)</name>
    <name type="common">Fission yeast</name>
    <dbReference type="NCBI Taxonomy" id="284812"/>
    <lineage>
        <taxon>Eukaryota</taxon>
        <taxon>Fungi</taxon>
        <taxon>Dikarya</taxon>
        <taxon>Ascomycota</taxon>
        <taxon>Taphrinomycotina</taxon>
        <taxon>Schizosaccharomycetes</taxon>
        <taxon>Schizosaccharomycetales</taxon>
        <taxon>Schizosaccharomycetaceae</taxon>
        <taxon>Schizosaccharomyces</taxon>
    </lineage>
</organism>